<proteinExistence type="inferred from homology"/>
<accession>A5GQJ6</accession>
<organism>
    <name type="scientific">Synechococcus sp. (strain RCC307)</name>
    <dbReference type="NCBI Taxonomy" id="316278"/>
    <lineage>
        <taxon>Bacteria</taxon>
        <taxon>Bacillati</taxon>
        <taxon>Cyanobacteriota</taxon>
        <taxon>Cyanophyceae</taxon>
        <taxon>Synechococcales</taxon>
        <taxon>Synechococcaceae</taxon>
        <taxon>Synechococcus</taxon>
    </lineage>
</organism>
<feature type="chain" id="PRO_1000025973" description="Photosystem I assembly protein Ycf3">
    <location>
        <begin position="1"/>
        <end position="173"/>
    </location>
</feature>
<feature type="repeat" description="TPR 1">
    <location>
        <begin position="35"/>
        <end position="68"/>
    </location>
</feature>
<feature type="repeat" description="TPR 2">
    <location>
        <begin position="72"/>
        <end position="105"/>
    </location>
</feature>
<feature type="repeat" description="TPR 3">
    <location>
        <begin position="120"/>
        <end position="153"/>
    </location>
</feature>
<protein>
    <recommendedName>
        <fullName evidence="1">Photosystem I assembly protein Ycf3</fullName>
    </recommendedName>
</protein>
<dbReference type="EMBL" id="CT978603">
    <property type="protein sequence ID" value="CAK27155.1"/>
    <property type="molecule type" value="Genomic_DNA"/>
</dbReference>
<dbReference type="SMR" id="A5GQJ6"/>
<dbReference type="STRING" id="316278.SynRCC307_0252"/>
<dbReference type="KEGG" id="syr:SynRCC307_0252"/>
<dbReference type="eggNOG" id="COG0457">
    <property type="taxonomic scope" value="Bacteria"/>
</dbReference>
<dbReference type="HOGENOM" id="CLU_141248_0_0_3"/>
<dbReference type="OrthoDB" id="9429505at2"/>
<dbReference type="Proteomes" id="UP000001115">
    <property type="component" value="Chromosome"/>
</dbReference>
<dbReference type="GO" id="GO:0031676">
    <property type="term" value="C:plasma membrane-derived thylakoid membrane"/>
    <property type="evidence" value="ECO:0007669"/>
    <property type="project" value="UniProtKB-SubCell"/>
</dbReference>
<dbReference type="GO" id="GO:0015979">
    <property type="term" value="P:photosynthesis"/>
    <property type="evidence" value="ECO:0007669"/>
    <property type="project" value="UniProtKB-UniRule"/>
</dbReference>
<dbReference type="Gene3D" id="1.25.40.10">
    <property type="entry name" value="Tetratricopeptide repeat domain"/>
    <property type="match status" value="1"/>
</dbReference>
<dbReference type="HAMAP" id="MF_00439">
    <property type="entry name" value="Ycf3"/>
    <property type="match status" value="1"/>
</dbReference>
<dbReference type="InterPro" id="IPR022818">
    <property type="entry name" value="PSI_Ycf3_assembly"/>
</dbReference>
<dbReference type="InterPro" id="IPR011990">
    <property type="entry name" value="TPR-like_helical_dom_sf"/>
</dbReference>
<dbReference type="InterPro" id="IPR019734">
    <property type="entry name" value="TPR_rpt"/>
</dbReference>
<dbReference type="InterPro" id="IPR051685">
    <property type="entry name" value="Ycf3/AcsC/BcsC/TPR_MFPF"/>
</dbReference>
<dbReference type="NCBIfam" id="NF002725">
    <property type="entry name" value="PRK02603.1"/>
    <property type="match status" value="1"/>
</dbReference>
<dbReference type="PANTHER" id="PTHR44943">
    <property type="entry name" value="CELLULOSE SYNTHASE OPERON PROTEIN C"/>
    <property type="match status" value="1"/>
</dbReference>
<dbReference type="PANTHER" id="PTHR44943:SF8">
    <property type="entry name" value="TPR REPEAT-CONTAINING PROTEIN MJ0263"/>
    <property type="match status" value="1"/>
</dbReference>
<dbReference type="Pfam" id="PF13424">
    <property type="entry name" value="TPR_12"/>
    <property type="match status" value="1"/>
</dbReference>
<dbReference type="SMART" id="SM00028">
    <property type="entry name" value="TPR"/>
    <property type="match status" value="3"/>
</dbReference>
<dbReference type="SUPFAM" id="SSF48452">
    <property type="entry name" value="TPR-like"/>
    <property type="match status" value="1"/>
</dbReference>
<dbReference type="PROSITE" id="PS50005">
    <property type="entry name" value="TPR"/>
    <property type="match status" value="3"/>
</dbReference>
<dbReference type="PROSITE" id="PS50293">
    <property type="entry name" value="TPR_REGION"/>
    <property type="match status" value="1"/>
</dbReference>
<keyword id="KW-0472">Membrane</keyword>
<keyword id="KW-0602">Photosynthesis</keyword>
<keyword id="KW-1185">Reference proteome</keyword>
<keyword id="KW-0677">Repeat</keyword>
<keyword id="KW-0793">Thylakoid</keyword>
<keyword id="KW-0802">TPR repeat</keyword>
<sequence>MPRSQRNDNFIDKSFTVMADLILKVLPTNQKAKEAFAYYRDGMSAQGDGEYAEALENYQEALRLEEDPNDRAFILYNMALVYASNGEHNRALEQYEQALALNAKMPQVLNNMAVIHHHLGSIAQEKGESDEADRRFDLAADFWSKAIRLAPNNYIEAQNWLKTTGRGSADVYL</sequence>
<name>YCF3_SYNR3</name>
<evidence type="ECO:0000255" key="1">
    <source>
        <dbReference type="HAMAP-Rule" id="MF_00439"/>
    </source>
</evidence>
<gene>
    <name evidence="1" type="primary">ycf3</name>
    <name type="ordered locus">SynRCC307_0252</name>
</gene>
<comment type="function">
    <text evidence="1">Essential for the assembly of the photosystem I (PSI) complex. May act as a chaperone-like factor to guide the assembly of the PSI subunits.</text>
</comment>
<comment type="subcellular location">
    <subcellularLocation>
        <location evidence="1">Cellular thylakoid membrane</location>
        <topology evidence="1">Peripheral membrane protein</topology>
    </subcellularLocation>
</comment>
<comment type="similarity">
    <text evidence="1">Belongs to the Ycf3 family.</text>
</comment>
<reference key="1">
    <citation type="submission" date="2006-05" db="EMBL/GenBank/DDBJ databases">
        <authorList>
            <consortium name="Genoscope"/>
        </authorList>
    </citation>
    <scope>NUCLEOTIDE SEQUENCE [LARGE SCALE GENOMIC DNA]</scope>
    <source>
        <strain>RCC307</strain>
    </source>
</reference>